<comment type="subcellular location">
    <subcellularLocation>
        <location evidence="2">Membrane</location>
        <topology evidence="2">Single-pass membrane protein</topology>
    </subcellularLocation>
</comment>
<comment type="miscellaneous">
    <text evidence="2">Almost completely overlaps VPS27.</text>
</comment>
<comment type="caution">
    <text evidence="3">Product of a dubious gene prediction unlikely to encode a functional protein. Because of that it is not part of the S.cerevisiae S288c complete/reference proteome set.</text>
</comment>
<name>YN82_YEAST</name>
<keyword id="KW-0472">Membrane</keyword>
<keyword id="KW-0812">Transmembrane</keyword>
<keyword id="KW-1133">Transmembrane helix</keyword>
<protein>
    <recommendedName>
        <fullName>Putative uncharacterized protein YNR005C</fullName>
    </recommendedName>
</protein>
<accession>P53717</accession>
<sequence length="134" mass="14726">MVFTSSESSSLLSSLKMTCSMVSMNSLEQISLIKGVPPFFTHILVSFQEDNWVFGLSAVLRILFFIQRIESLGFTLLDLNTSEISNAMGRSRSPLGMLSLVACSINASNSLGVLTDILFLVLYSLLIHLSKKKS</sequence>
<organism>
    <name type="scientific">Saccharomyces cerevisiae (strain ATCC 204508 / S288c)</name>
    <name type="common">Baker's yeast</name>
    <dbReference type="NCBI Taxonomy" id="559292"/>
    <lineage>
        <taxon>Eukaryota</taxon>
        <taxon>Fungi</taxon>
        <taxon>Dikarya</taxon>
        <taxon>Ascomycota</taxon>
        <taxon>Saccharomycotina</taxon>
        <taxon>Saccharomycetes</taxon>
        <taxon>Saccharomycetales</taxon>
        <taxon>Saccharomycetaceae</taxon>
        <taxon>Saccharomyces</taxon>
    </lineage>
</organism>
<proteinExistence type="uncertain"/>
<gene>
    <name type="ordered locus">YNR005C</name>
    <name type="ORF">N2036</name>
</gene>
<feature type="chain" id="PRO_0000203469" description="Putative uncharacterized protein YNR005C">
    <location>
        <begin position="1"/>
        <end position="134"/>
    </location>
</feature>
<feature type="transmembrane region" description="Helical" evidence="1">
    <location>
        <begin position="110"/>
        <end position="130"/>
    </location>
</feature>
<evidence type="ECO:0000255" key="1"/>
<evidence type="ECO:0000305" key="2"/>
<evidence type="ECO:0000305" key="3">
    <source>
    </source>
</evidence>
<dbReference type="EMBL" id="X77395">
    <property type="status" value="NOT_ANNOTATED_CDS"/>
    <property type="molecule type" value="Genomic_DNA"/>
</dbReference>
<dbReference type="EMBL" id="Z71620">
    <property type="protein sequence ID" value="CAA96281.1"/>
    <property type="molecule type" value="Genomic_DNA"/>
</dbReference>
<dbReference type="EMBL" id="AY693327">
    <property type="protein sequence ID" value="AAT93346.1"/>
    <property type="molecule type" value="Genomic_DNA"/>
</dbReference>
<dbReference type="PIR" id="S63331">
    <property type="entry name" value="S63331"/>
</dbReference>
<dbReference type="DIP" id="DIP-1873N"/>
<dbReference type="IntAct" id="P53717">
    <property type="interactions" value="2"/>
</dbReference>
<dbReference type="MINT" id="P53717"/>
<dbReference type="PaxDb" id="4932-YNR005C"/>
<dbReference type="EnsemblFungi" id="YNR005C_mRNA">
    <property type="protein sequence ID" value="YNR005C"/>
    <property type="gene ID" value="YNR005C"/>
</dbReference>
<dbReference type="AGR" id="SGD:S000005288"/>
<dbReference type="SGD" id="S000005288">
    <property type="gene designation" value="YNR005C"/>
</dbReference>
<dbReference type="HOGENOM" id="CLU_1897836_0_0_1"/>
<dbReference type="GO" id="GO:0016020">
    <property type="term" value="C:membrane"/>
    <property type="evidence" value="ECO:0007669"/>
    <property type="project" value="UniProtKB-SubCell"/>
</dbReference>
<reference key="1">
    <citation type="journal article" date="1994" name="Yeast">
        <title>Twelve open reading frames revealed in the 23.6 kb segment flanking the centromere on the Saccharomyces cerevisiae chromosome XIV right arm.</title>
        <authorList>
            <person name="Verhasselt P."/>
            <person name="Aert R."/>
            <person name="Voet M."/>
            <person name="Volckaert G."/>
        </authorList>
    </citation>
    <scope>NUCLEOTIDE SEQUENCE [GENOMIC DNA]</scope>
    <source>
        <strain>ATCC 96604 / S288c / FY1679</strain>
    </source>
</reference>
<reference key="2">
    <citation type="journal article" date="1997" name="Nature">
        <title>The nucleotide sequence of Saccharomyces cerevisiae chromosome XIV and its evolutionary implications.</title>
        <authorList>
            <person name="Philippsen P."/>
            <person name="Kleine K."/>
            <person name="Poehlmann R."/>
            <person name="Duesterhoeft A."/>
            <person name="Hamberg K."/>
            <person name="Hegemann J.H."/>
            <person name="Obermaier B."/>
            <person name="Urrestarazu L.A."/>
            <person name="Aert R."/>
            <person name="Albermann K."/>
            <person name="Altmann R."/>
            <person name="Andre B."/>
            <person name="Baladron V."/>
            <person name="Ballesta J.P.G."/>
            <person name="Becam A.-M."/>
            <person name="Beinhauer J.D."/>
            <person name="Boskovic J."/>
            <person name="Buitrago M.J."/>
            <person name="Bussereau F."/>
            <person name="Coster F."/>
            <person name="Crouzet M."/>
            <person name="D'Angelo M."/>
            <person name="Dal Pero F."/>
            <person name="De Antoni A."/>
            <person name="del Rey F."/>
            <person name="Doignon F."/>
            <person name="Domdey H."/>
            <person name="Dubois E."/>
            <person name="Fiedler T.A."/>
            <person name="Fleig U."/>
            <person name="Floeth M."/>
            <person name="Fritz C."/>
            <person name="Gaillardin C."/>
            <person name="Garcia-Cantalejo J.M."/>
            <person name="Glansdorff N."/>
            <person name="Goffeau A."/>
            <person name="Gueldener U."/>
            <person name="Herbert C.J."/>
            <person name="Heumann K."/>
            <person name="Heuss-Neitzel D."/>
            <person name="Hilbert H."/>
            <person name="Hinni K."/>
            <person name="Iraqui Houssaini I."/>
            <person name="Jacquet M."/>
            <person name="Jimenez A."/>
            <person name="Jonniaux J.-L."/>
            <person name="Karpfinger-Hartl L."/>
            <person name="Lanfranchi G."/>
            <person name="Lepingle A."/>
            <person name="Levesque H."/>
            <person name="Lyck R."/>
            <person name="Maftahi M."/>
            <person name="Mallet L."/>
            <person name="Maurer C.T.C."/>
            <person name="Messenguy F."/>
            <person name="Mewes H.-W."/>
            <person name="Moestl D."/>
            <person name="Nasr F."/>
            <person name="Nicaud J.-M."/>
            <person name="Niedenthal R.K."/>
            <person name="Pandolfo D."/>
            <person name="Pierard A."/>
            <person name="Piravandi E."/>
            <person name="Planta R.J."/>
            <person name="Pohl T.M."/>
            <person name="Purnelle B."/>
            <person name="Rebischung C."/>
            <person name="Remacha M.A."/>
            <person name="Revuelta J.L."/>
            <person name="Rinke M."/>
            <person name="Saiz J.E."/>
            <person name="Sartorello F."/>
            <person name="Scherens B."/>
            <person name="Sen-Gupta M."/>
            <person name="Soler-Mira A."/>
            <person name="Urbanus J.H.M."/>
            <person name="Valle G."/>
            <person name="Van Dyck L."/>
            <person name="Verhasselt P."/>
            <person name="Vierendeels F."/>
            <person name="Vissers S."/>
            <person name="Voet M."/>
            <person name="Volckaert G."/>
            <person name="Wach A."/>
            <person name="Wambutt R."/>
            <person name="Wedler H."/>
            <person name="Zollner A."/>
            <person name="Hani J."/>
        </authorList>
    </citation>
    <scope>NUCLEOTIDE SEQUENCE [LARGE SCALE GENOMIC DNA]</scope>
    <source>
        <strain>ATCC 204508 / S288c</strain>
    </source>
</reference>
<reference key="3">
    <citation type="journal article" date="2014" name="G3 (Bethesda)">
        <title>The reference genome sequence of Saccharomyces cerevisiae: Then and now.</title>
        <authorList>
            <person name="Engel S.R."/>
            <person name="Dietrich F.S."/>
            <person name="Fisk D.G."/>
            <person name="Binkley G."/>
            <person name="Balakrishnan R."/>
            <person name="Costanzo M.C."/>
            <person name="Dwight S.S."/>
            <person name="Hitz B.C."/>
            <person name="Karra K."/>
            <person name="Nash R.S."/>
            <person name="Weng S."/>
            <person name="Wong E.D."/>
            <person name="Lloyd P."/>
            <person name="Skrzypek M.S."/>
            <person name="Miyasato S.R."/>
            <person name="Simison M."/>
            <person name="Cherry J.M."/>
        </authorList>
    </citation>
    <scope>GENOME REANNOTATION</scope>
    <source>
        <strain>ATCC 204508 / S288c</strain>
    </source>
</reference>
<reference key="4">
    <citation type="journal article" date="2007" name="Genome Res.">
        <title>Approaching a complete repository of sequence-verified protein-encoding clones for Saccharomyces cerevisiae.</title>
        <authorList>
            <person name="Hu Y."/>
            <person name="Rolfs A."/>
            <person name="Bhullar B."/>
            <person name="Murthy T.V.S."/>
            <person name="Zhu C."/>
            <person name="Berger M.F."/>
            <person name="Camargo A.A."/>
            <person name="Kelley F."/>
            <person name="McCarron S."/>
            <person name="Jepson D."/>
            <person name="Richardson A."/>
            <person name="Raphael J."/>
            <person name="Moreira D."/>
            <person name="Taycher E."/>
            <person name="Zuo D."/>
            <person name="Mohr S."/>
            <person name="Kane M.F."/>
            <person name="Williamson J."/>
            <person name="Simpson A.J.G."/>
            <person name="Bulyk M.L."/>
            <person name="Harlow E."/>
            <person name="Marsischky G."/>
            <person name="Kolodner R.D."/>
            <person name="LaBaer J."/>
        </authorList>
    </citation>
    <scope>NUCLEOTIDE SEQUENCE [GENOMIC DNA]</scope>
    <source>
        <strain>ATCC 204508 / S288c</strain>
    </source>
</reference>